<sequence>MAEIYLAGGCFWGLEEYFSRIEGVKKTTVGYANGQVESTNYQLIHQTDHAETVHLIYDEKRVSLREILLYYFRVIDPLSVNKQGNDVGRQYRTGVYYTNQADKAVIEQVFAEQEKQLGQKIAVELEPLRHYVLAEDYHQDYLKKNPGGYCHINVNDAYQPLVDPGQYEKPTDAELKEQLTQEQYQVTQLSATERPFHNAYNATFEEGIYVDVTTGEPLFFAGDKFESGCGWPSFSRPIAREVLRYYEDKSHGMERIEVRSRSGNAHLGHVFTDGPESAGGLRYCINSAALRFIPKEKMEAEGYAYLLQHMK</sequence>
<feature type="chain" id="PRO_0000138516" description="Peptide methionine sulfoxide reductase MsrA/MsrB">
    <location>
        <begin position="1"/>
        <end position="311"/>
    </location>
</feature>
<feature type="domain" description="MsrB" evidence="2">
    <location>
        <begin position="172"/>
        <end position="295"/>
    </location>
</feature>
<feature type="region of interest" description="Peptide methionine sulfoxide reductase A">
    <location>
        <begin position="1"/>
        <end position="155"/>
    </location>
</feature>
<feature type="active site" evidence="1">
    <location>
        <position position="10"/>
    </location>
</feature>
<feature type="active site" description="Nucleophile" evidence="2">
    <location>
        <position position="284"/>
    </location>
</feature>
<keyword id="KW-0511">Multifunctional enzyme</keyword>
<keyword id="KW-0560">Oxidoreductase</keyword>
<keyword id="KW-1185">Reference proteome</keyword>
<protein>
    <recommendedName>
        <fullName>Peptide methionine sulfoxide reductase MsrA/MsrB</fullName>
    </recommendedName>
    <domain>
        <recommendedName>
            <fullName>Peptide methionine sulfoxide reductase MsrA</fullName>
            <shortName>Protein-methionine-S-oxide reductase</shortName>
            <ecNumber>1.8.4.11</ecNumber>
        </recommendedName>
        <alternativeName>
            <fullName>Peptide-methionine (S)-S-oxide reductase</fullName>
            <shortName>Peptide Met(O) reductase</shortName>
        </alternativeName>
    </domain>
    <domain>
        <recommendedName>
            <fullName>Peptide methionine sulfoxide reductase MsrB</fullName>
            <ecNumber>1.8.4.12</ecNumber>
        </recommendedName>
        <alternativeName>
            <fullName>Peptide-methionine (R)-S-oxide reductase</fullName>
        </alternativeName>
    </domain>
</protein>
<accession>Q9LAM9</accession>
<accession>A8AUY7</accession>
<evidence type="ECO:0000250" key="1"/>
<evidence type="ECO:0000255" key="2">
    <source>
        <dbReference type="PROSITE-ProRule" id="PRU01126"/>
    </source>
</evidence>
<evidence type="ECO:0000269" key="3">
    <source>
    </source>
</evidence>
<evidence type="ECO:0000305" key="4"/>
<gene>
    <name type="primary">msrAB</name>
    <name type="synonym">msrA</name>
    <name type="ordered locus">SGO_0278</name>
</gene>
<organism>
    <name type="scientific">Streptococcus gordonii (strain Challis / ATCC 35105 / BCRC 15272 / CH1 / DL1 / V288)</name>
    <dbReference type="NCBI Taxonomy" id="467705"/>
    <lineage>
        <taxon>Bacteria</taxon>
        <taxon>Bacillati</taxon>
        <taxon>Bacillota</taxon>
        <taxon>Bacilli</taxon>
        <taxon>Lactobacillales</taxon>
        <taxon>Streptococcaceae</taxon>
        <taxon>Streptococcus</taxon>
    </lineage>
</organism>
<dbReference type="EC" id="1.8.4.11"/>
<dbReference type="EC" id="1.8.4.12"/>
<dbReference type="EMBL" id="AF128264">
    <property type="protein sequence ID" value="AAF36477.1"/>
    <property type="molecule type" value="Genomic_DNA"/>
</dbReference>
<dbReference type="EMBL" id="CP000725">
    <property type="protein sequence ID" value="ABV11083.1"/>
    <property type="molecule type" value="Genomic_DNA"/>
</dbReference>
<dbReference type="RefSeq" id="WP_011999808.1">
    <property type="nucleotide sequence ID" value="NC_009785.1"/>
</dbReference>
<dbReference type="SMR" id="Q9LAM9"/>
<dbReference type="STRING" id="467705.SGO_0278"/>
<dbReference type="KEGG" id="sgo:SGO_0278"/>
<dbReference type="eggNOG" id="COG0225">
    <property type="taxonomic scope" value="Bacteria"/>
</dbReference>
<dbReference type="eggNOG" id="COG0229">
    <property type="taxonomic scope" value="Bacteria"/>
</dbReference>
<dbReference type="HOGENOM" id="CLU_031040_1_0_9"/>
<dbReference type="BRENDA" id="1.8.4.12">
    <property type="organism ID" value="5934"/>
</dbReference>
<dbReference type="Proteomes" id="UP000001131">
    <property type="component" value="Chromosome"/>
</dbReference>
<dbReference type="GO" id="GO:0005737">
    <property type="term" value="C:cytoplasm"/>
    <property type="evidence" value="ECO:0007669"/>
    <property type="project" value="TreeGrafter"/>
</dbReference>
<dbReference type="GO" id="GO:0033744">
    <property type="term" value="F:L-methionine:thioredoxin-disulfide S-oxidoreductase activity"/>
    <property type="evidence" value="ECO:0007669"/>
    <property type="project" value="RHEA"/>
</dbReference>
<dbReference type="GO" id="GO:0033743">
    <property type="term" value="F:peptide-methionine (R)-S-oxide reductase activity"/>
    <property type="evidence" value="ECO:0007669"/>
    <property type="project" value="UniProtKB-UniRule"/>
</dbReference>
<dbReference type="GO" id="GO:0008113">
    <property type="term" value="F:peptide-methionine (S)-S-oxide reductase activity"/>
    <property type="evidence" value="ECO:0007669"/>
    <property type="project" value="UniProtKB-UniRule"/>
</dbReference>
<dbReference type="GO" id="GO:0036211">
    <property type="term" value="P:protein modification process"/>
    <property type="evidence" value="ECO:0007669"/>
    <property type="project" value="UniProtKB-UniRule"/>
</dbReference>
<dbReference type="GO" id="GO:0030091">
    <property type="term" value="P:protein repair"/>
    <property type="evidence" value="ECO:0007669"/>
    <property type="project" value="InterPro"/>
</dbReference>
<dbReference type="GO" id="GO:0006979">
    <property type="term" value="P:response to oxidative stress"/>
    <property type="evidence" value="ECO:0007669"/>
    <property type="project" value="InterPro"/>
</dbReference>
<dbReference type="FunFam" id="3.30.1060.10:FF:000007">
    <property type="entry name" value="Peptide methionine sulfoxide reductase msrA/msrB"/>
    <property type="match status" value="1"/>
</dbReference>
<dbReference type="FunFam" id="2.170.150.20:FF:000003">
    <property type="entry name" value="Peptide methionine sulfoxide reductase MsrB"/>
    <property type="match status" value="1"/>
</dbReference>
<dbReference type="Gene3D" id="2.170.150.20">
    <property type="entry name" value="Peptide methionine sulfoxide reductase"/>
    <property type="match status" value="1"/>
</dbReference>
<dbReference type="Gene3D" id="3.30.1060.10">
    <property type="entry name" value="Peptide methionine sulphoxide reductase MsrA"/>
    <property type="match status" value="1"/>
</dbReference>
<dbReference type="HAMAP" id="MF_01401">
    <property type="entry name" value="MsrA"/>
    <property type="match status" value="1"/>
</dbReference>
<dbReference type="HAMAP" id="MF_01400">
    <property type="entry name" value="MsrB"/>
    <property type="match status" value="1"/>
</dbReference>
<dbReference type="InterPro" id="IPR002569">
    <property type="entry name" value="Met_Sox_Rdtase_MsrA_dom"/>
</dbReference>
<dbReference type="InterPro" id="IPR036509">
    <property type="entry name" value="Met_Sox_Rdtase_MsrA_sf"/>
</dbReference>
<dbReference type="InterPro" id="IPR028427">
    <property type="entry name" value="Met_Sox_Rdtase_MsrB"/>
</dbReference>
<dbReference type="InterPro" id="IPR002579">
    <property type="entry name" value="Met_Sox_Rdtase_MsrB_dom"/>
</dbReference>
<dbReference type="InterPro" id="IPR011057">
    <property type="entry name" value="Mss4-like_sf"/>
</dbReference>
<dbReference type="NCBIfam" id="TIGR00401">
    <property type="entry name" value="msrA"/>
    <property type="match status" value="1"/>
</dbReference>
<dbReference type="NCBIfam" id="TIGR00357">
    <property type="entry name" value="peptide-methionine (R)-S-oxide reductase MsrB"/>
    <property type="match status" value="1"/>
</dbReference>
<dbReference type="PANTHER" id="PTHR10173">
    <property type="entry name" value="METHIONINE SULFOXIDE REDUCTASE"/>
    <property type="match status" value="1"/>
</dbReference>
<dbReference type="PANTHER" id="PTHR10173:SF60">
    <property type="entry name" value="PEPTIDE METHIONINE SULFOXIDE REDUCTASE MSRA_MSRB 1"/>
    <property type="match status" value="1"/>
</dbReference>
<dbReference type="Pfam" id="PF01625">
    <property type="entry name" value="PMSR"/>
    <property type="match status" value="1"/>
</dbReference>
<dbReference type="Pfam" id="PF01641">
    <property type="entry name" value="SelR"/>
    <property type="match status" value="1"/>
</dbReference>
<dbReference type="SUPFAM" id="SSF51316">
    <property type="entry name" value="Mss4-like"/>
    <property type="match status" value="1"/>
</dbReference>
<dbReference type="SUPFAM" id="SSF55068">
    <property type="entry name" value="Peptide methionine sulfoxide reductase"/>
    <property type="match status" value="1"/>
</dbReference>
<dbReference type="PROSITE" id="PS51790">
    <property type="entry name" value="MSRB"/>
    <property type="match status" value="1"/>
</dbReference>
<proteinExistence type="inferred from homology"/>
<comment type="function">
    <text evidence="1 3">Has an important function as a repair enzyme for proteins that have been inactivated by oxidation. Catalyzes the reversible oxidation-reduction of methionine sulfoxide in proteins to methionine (By similarity). Involved in protection against oxidative stress when the bacterium enters the host bloodstream and required for maximal growth under aerobic and anaerobic conditions.</text>
</comment>
<comment type="catalytic activity">
    <reaction>
        <text>L-methionyl-[protein] + [thioredoxin]-disulfide + H2O = L-methionyl-(S)-S-oxide-[protein] + [thioredoxin]-dithiol</text>
        <dbReference type="Rhea" id="RHEA:14217"/>
        <dbReference type="Rhea" id="RHEA-COMP:10698"/>
        <dbReference type="Rhea" id="RHEA-COMP:10700"/>
        <dbReference type="Rhea" id="RHEA-COMP:12313"/>
        <dbReference type="Rhea" id="RHEA-COMP:12315"/>
        <dbReference type="ChEBI" id="CHEBI:15377"/>
        <dbReference type="ChEBI" id="CHEBI:16044"/>
        <dbReference type="ChEBI" id="CHEBI:29950"/>
        <dbReference type="ChEBI" id="CHEBI:44120"/>
        <dbReference type="ChEBI" id="CHEBI:50058"/>
        <dbReference type="EC" id="1.8.4.11"/>
    </reaction>
</comment>
<comment type="catalytic activity">
    <reaction>
        <text>[thioredoxin]-disulfide + L-methionine + H2O = L-methionine (S)-S-oxide + [thioredoxin]-dithiol</text>
        <dbReference type="Rhea" id="RHEA:19993"/>
        <dbReference type="Rhea" id="RHEA-COMP:10698"/>
        <dbReference type="Rhea" id="RHEA-COMP:10700"/>
        <dbReference type="ChEBI" id="CHEBI:15377"/>
        <dbReference type="ChEBI" id="CHEBI:29950"/>
        <dbReference type="ChEBI" id="CHEBI:50058"/>
        <dbReference type="ChEBI" id="CHEBI:57844"/>
        <dbReference type="ChEBI" id="CHEBI:58772"/>
        <dbReference type="EC" id="1.8.4.11"/>
    </reaction>
</comment>
<comment type="catalytic activity">
    <reaction>
        <text>L-methionyl-[protein] + [thioredoxin]-disulfide + H2O = L-methionyl-(R)-S-oxide-[protein] + [thioredoxin]-dithiol</text>
        <dbReference type="Rhea" id="RHEA:24164"/>
        <dbReference type="Rhea" id="RHEA-COMP:10698"/>
        <dbReference type="Rhea" id="RHEA-COMP:10700"/>
        <dbReference type="Rhea" id="RHEA-COMP:12313"/>
        <dbReference type="Rhea" id="RHEA-COMP:12314"/>
        <dbReference type="ChEBI" id="CHEBI:15377"/>
        <dbReference type="ChEBI" id="CHEBI:16044"/>
        <dbReference type="ChEBI" id="CHEBI:29950"/>
        <dbReference type="ChEBI" id="CHEBI:45764"/>
        <dbReference type="ChEBI" id="CHEBI:50058"/>
        <dbReference type="EC" id="1.8.4.12"/>
    </reaction>
</comment>
<comment type="similarity">
    <text evidence="4">In the N-terminal section; belongs to the MsrA Met sulfoxide reductase family.</text>
</comment>
<comment type="similarity">
    <text evidence="4">In the C-terminal section; belongs to the MsrB Met sulfoxide reductase family.</text>
</comment>
<name>MSRAB_STRGC</name>
<reference key="1">
    <citation type="journal article" date="2000" name="Infect. Immun.">
        <title>A shift from oral to blood pH is a stimulus for adaptive gene expression of Streptococcus gordonii CH1 and induces protection against oxidative stress and enhanced bacterial growth by expression of msrA.</title>
        <authorList>
            <person name="Vriesema A.J.M."/>
            <person name="Dankert J."/>
            <person name="Zaat S.A.J."/>
        </authorList>
    </citation>
    <scope>NUCLEOTIDE SEQUENCE [GENOMIC DNA]</scope>
    <scope>FUNCTION</scope>
</reference>
<reference key="2">
    <citation type="journal article" date="2007" name="J. Bacteriol.">
        <title>Genome-wide transcriptional changes in Streptococcus gordonii in response to competence signaling peptide.</title>
        <authorList>
            <person name="Vickerman M.M."/>
            <person name="Iobst S."/>
            <person name="Jesionowski A.M."/>
            <person name="Gill S.R."/>
        </authorList>
    </citation>
    <scope>NUCLEOTIDE SEQUENCE [LARGE SCALE GENOMIC DNA]</scope>
    <source>
        <strain>Challis / ATCC 35105 / BCRC 15272 / CH1 / DL1 / V288</strain>
    </source>
</reference>